<evidence type="ECO:0000250" key="1"/>
<evidence type="ECO:0000255" key="2"/>
<evidence type="ECO:0000269" key="3">
    <source>
    </source>
</evidence>
<organism>
    <name type="scientific">Schizosaccharomyces pombe (strain 972 / ATCC 24843)</name>
    <name type="common">Fission yeast</name>
    <dbReference type="NCBI Taxonomy" id="284812"/>
    <lineage>
        <taxon>Eukaryota</taxon>
        <taxon>Fungi</taxon>
        <taxon>Dikarya</taxon>
        <taxon>Ascomycota</taxon>
        <taxon>Taphrinomycotina</taxon>
        <taxon>Schizosaccharomycetes</taxon>
        <taxon>Schizosaccharomycetales</taxon>
        <taxon>Schizosaccharomycetaceae</taxon>
        <taxon>Schizosaccharomyces</taxon>
    </lineage>
</organism>
<proteinExistence type="inferred from homology"/>
<keyword id="KW-0256">Endoplasmic reticulum</keyword>
<keyword id="KW-0325">Glycoprotein</keyword>
<keyword id="KW-0472">Membrane</keyword>
<keyword id="KW-0539">Nucleus</keyword>
<keyword id="KW-1185">Reference proteome</keyword>
<keyword id="KW-0812">Transmembrane</keyword>
<keyword id="KW-1133">Transmembrane helix</keyword>
<name>SPO7_SCHPO</name>
<dbReference type="EMBL" id="CU329671">
    <property type="protein sequence ID" value="CAB62097.1"/>
    <property type="molecule type" value="Genomic_DNA"/>
</dbReference>
<dbReference type="PIR" id="T50384">
    <property type="entry name" value="T50384"/>
</dbReference>
<dbReference type="RefSeq" id="NP_595201.1">
    <property type="nucleotide sequence ID" value="NM_001021107.2"/>
</dbReference>
<dbReference type="SMR" id="Q9USQ0"/>
<dbReference type="BioGRID" id="277795">
    <property type="interactions" value="7"/>
</dbReference>
<dbReference type="FunCoup" id="Q9USQ0">
    <property type="interactions" value="58"/>
</dbReference>
<dbReference type="STRING" id="284812.Q9USQ0"/>
<dbReference type="GlyCosmos" id="Q9USQ0">
    <property type="glycosylation" value="2 sites, No reported glycans"/>
</dbReference>
<dbReference type="iPTMnet" id="Q9USQ0"/>
<dbReference type="PaxDb" id="4896-SPBC902.03.1"/>
<dbReference type="EnsemblFungi" id="SPBC902.03.1">
    <property type="protein sequence ID" value="SPBC902.03.1:pep"/>
    <property type="gene ID" value="SPBC902.03"/>
</dbReference>
<dbReference type="GeneID" id="2541282"/>
<dbReference type="KEGG" id="spo:2541282"/>
<dbReference type="PomBase" id="SPBC902.03"/>
<dbReference type="VEuPathDB" id="FungiDB:SPBC902.03"/>
<dbReference type="eggNOG" id="ENOG502QTI4">
    <property type="taxonomic scope" value="Eukaryota"/>
</dbReference>
<dbReference type="HOGENOM" id="CLU_101485_0_0_1"/>
<dbReference type="InParanoid" id="Q9USQ0"/>
<dbReference type="OMA" id="FVPHCNR"/>
<dbReference type="PhylomeDB" id="Q9USQ0"/>
<dbReference type="Reactome" id="R-SPO-4419969">
    <property type="pathway name" value="Depolymerization of the Nuclear Lamina"/>
</dbReference>
<dbReference type="PRO" id="PR:Q9USQ0"/>
<dbReference type="Proteomes" id="UP000002485">
    <property type="component" value="Chromosome II"/>
</dbReference>
<dbReference type="GO" id="GO:0005737">
    <property type="term" value="C:cytoplasm"/>
    <property type="evidence" value="ECO:0000318"/>
    <property type="project" value="GO_Central"/>
</dbReference>
<dbReference type="GO" id="GO:0005783">
    <property type="term" value="C:endoplasmic reticulum"/>
    <property type="evidence" value="ECO:0007005"/>
    <property type="project" value="PomBase"/>
</dbReference>
<dbReference type="GO" id="GO:0005789">
    <property type="term" value="C:endoplasmic reticulum membrane"/>
    <property type="evidence" value="ECO:0007669"/>
    <property type="project" value="UniProtKB-SubCell"/>
</dbReference>
<dbReference type="GO" id="GO:0071595">
    <property type="term" value="C:Nem1-Spo7 phosphatase complex"/>
    <property type="evidence" value="ECO:0000318"/>
    <property type="project" value="GO_Central"/>
</dbReference>
<dbReference type="GO" id="GO:0031965">
    <property type="term" value="C:nuclear membrane"/>
    <property type="evidence" value="ECO:0007669"/>
    <property type="project" value="UniProtKB-SubCell"/>
</dbReference>
<dbReference type="GO" id="GO:0019888">
    <property type="term" value="F:protein phosphatase regulator activity"/>
    <property type="evidence" value="ECO:0000303"/>
    <property type="project" value="PomBase"/>
</dbReference>
<dbReference type="GO" id="GO:0071072">
    <property type="term" value="P:negative regulation of phospholipid biosynthetic process"/>
    <property type="evidence" value="ECO:0000266"/>
    <property type="project" value="PomBase"/>
</dbReference>
<dbReference type="GO" id="GO:0006998">
    <property type="term" value="P:nuclear envelope organization"/>
    <property type="evidence" value="ECO:0000266"/>
    <property type="project" value="PomBase"/>
</dbReference>
<dbReference type="GO" id="GO:0023052">
    <property type="term" value="P:signaling"/>
    <property type="evidence" value="ECO:0000303"/>
    <property type="project" value="PomBase"/>
</dbReference>
<dbReference type="InterPro" id="IPR005605">
    <property type="entry name" value="Spo7"/>
</dbReference>
<dbReference type="PANTHER" id="PTHR28249">
    <property type="entry name" value="SPORULATION-SPECIFIC PROTEIN SPO7"/>
    <property type="match status" value="1"/>
</dbReference>
<dbReference type="PANTHER" id="PTHR28249:SF1">
    <property type="entry name" value="SPORULATION-SPECIFIC PROTEIN SPO7"/>
    <property type="match status" value="1"/>
</dbReference>
<dbReference type="Pfam" id="PF03907">
    <property type="entry name" value="Spo7"/>
    <property type="match status" value="1"/>
</dbReference>
<comment type="function">
    <text evidence="1">Probable regulatory component of the nem1-spo7 complex which acts as a phosphatase and may be required for proper nuclear membrane morphology.</text>
</comment>
<comment type="subunit">
    <text evidence="1">Component of the nem1-spo7 complex.</text>
</comment>
<comment type="subcellular location">
    <subcellularLocation>
        <location evidence="3">Endoplasmic reticulum membrane</location>
        <topology evidence="3">Multi-pass membrane protein</topology>
    </subcellularLocation>
    <subcellularLocation>
        <location evidence="1">Nucleus membrane</location>
        <topology evidence="1">Multi-pass membrane protein</topology>
    </subcellularLocation>
</comment>
<accession>Q9USQ0</accession>
<gene>
    <name type="primary">spo7</name>
    <name type="ORF">SPBC902.03</name>
</gene>
<feature type="chain" id="PRO_0000315976" description="Sporulation-specific protein spo7">
    <location>
        <begin position="1"/>
        <end position="180"/>
    </location>
</feature>
<feature type="transmembrane region" description="Helical" evidence="2">
    <location>
        <begin position="36"/>
        <end position="56"/>
    </location>
</feature>
<feature type="transmembrane region" description="Helical" evidence="2">
    <location>
        <begin position="68"/>
        <end position="88"/>
    </location>
</feature>
<feature type="glycosylation site" description="N-linked (GlcNAc...) asparagine" evidence="2">
    <location>
        <position position="163"/>
    </location>
</feature>
<feature type="glycosylation site" description="N-linked (GlcNAc...) asparagine" evidence="2">
    <location>
        <position position="169"/>
    </location>
</feature>
<protein>
    <recommendedName>
        <fullName>Sporulation-specific protein spo7</fullName>
    </recommendedName>
</protein>
<reference key="1">
    <citation type="journal article" date="2002" name="Nature">
        <title>The genome sequence of Schizosaccharomyces pombe.</title>
        <authorList>
            <person name="Wood V."/>
            <person name="Gwilliam R."/>
            <person name="Rajandream M.A."/>
            <person name="Lyne M.H."/>
            <person name="Lyne R."/>
            <person name="Stewart A."/>
            <person name="Sgouros J.G."/>
            <person name="Peat N."/>
            <person name="Hayles J."/>
            <person name="Baker S.G."/>
            <person name="Basham D."/>
            <person name="Bowman S."/>
            <person name="Brooks K."/>
            <person name="Brown D."/>
            <person name="Brown S."/>
            <person name="Chillingworth T."/>
            <person name="Churcher C.M."/>
            <person name="Collins M."/>
            <person name="Connor R."/>
            <person name="Cronin A."/>
            <person name="Davis P."/>
            <person name="Feltwell T."/>
            <person name="Fraser A."/>
            <person name="Gentles S."/>
            <person name="Goble A."/>
            <person name="Hamlin N."/>
            <person name="Harris D.E."/>
            <person name="Hidalgo J."/>
            <person name="Hodgson G."/>
            <person name="Holroyd S."/>
            <person name="Hornsby T."/>
            <person name="Howarth S."/>
            <person name="Huckle E.J."/>
            <person name="Hunt S."/>
            <person name="Jagels K."/>
            <person name="James K.D."/>
            <person name="Jones L."/>
            <person name="Jones M."/>
            <person name="Leather S."/>
            <person name="McDonald S."/>
            <person name="McLean J."/>
            <person name="Mooney P."/>
            <person name="Moule S."/>
            <person name="Mungall K.L."/>
            <person name="Murphy L.D."/>
            <person name="Niblett D."/>
            <person name="Odell C."/>
            <person name="Oliver K."/>
            <person name="O'Neil S."/>
            <person name="Pearson D."/>
            <person name="Quail M.A."/>
            <person name="Rabbinowitsch E."/>
            <person name="Rutherford K.M."/>
            <person name="Rutter S."/>
            <person name="Saunders D."/>
            <person name="Seeger K."/>
            <person name="Sharp S."/>
            <person name="Skelton J."/>
            <person name="Simmonds M.N."/>
            <person name="Squares R."/>
            <person name="Squares S."/>
            <person name="Stevens K."/>
            <person name="Taylor K."/>
            <person name="Taylor R.G."/>
            <person name="Tivey A."/>
            <person name="Walsh S.V."/>
            <person name="Warren T."/>
            <person name="Whitehead S."/>
            <person name="Woodward J.R."/>
            <person name="Volckaert G."/>
            <person name="Aert R."/>
            <person name="Robben J."/>
            <person name="Grymonprez B."/>
            <person name="Weltjens I."/>
            <person name="Vanstreels E."/>
            <person name="Rieger M."/>
            <person name="Schaefer M."/>
            <person name="Mueller-Auer S."/>
            <person name="Gabel C."/>
            <person name="Fuchs M."/>
            <person name="Duesterhoeft A."/>
            <person name="Fritzc C."/>
            <person name="Holzer E."/>
            <person name="Moestl D."/>
            <person name="Hilbert H."/>
            <person name="Borzym K."/>
            <person name="Langer I."/>
            <person name="Beck A."/>
            <person name="Lehrach H."/>
            <person name="Reinhardt R."/>
            <person name="Pohl T.M."/>
            <person name="Eger P."/>
            <person name="Zimmermann W."/>
            <person name="Wedler H."/>
            <person name="Wambutt R."/>
            <person name="Purnelle B."/>
            <person name="Goffeau A."/>
            <person name="Cadieu E."/>
            <person name="Dreano S."/>
            <person name="Gloux S."/>
            <person name="Lelaure V."/>
            <person name="Mottier S."/>
            <person name="Galibert F."/>
            <person name="Aves S.J."/>
            <person name="Xiang Z."/>
            <person name="Hunt C."/>
            <person name="Moore K."/>
            <person name="Hurst S.M."/>
            <person name="Lucas M."/>
            <person name="Rochet M."/>
            <person name="Gaillardin C."/>
            <person name="Tallada V.A."/>
            <person name="Garzon A."/>
            <person name="Thode G."/>
            <person name="Daga R.R."/>
            <person name="Cruzado L."/>
            <person name="Jimenez J."/>
            <person name="Sanchez M."/>
            <person name="del Rey F."/>
            <person name="Benito J."/>
            <person name="Dominguez A."/>
            <person name="Revuelta J.L."/>
            <person name="Moreno S."/>
            <person name="Armstrong J."/>
            <person name="Forsburg S.L."/>
            <person name="Cerutti L."/>
            <person name="Lowe T."/>
            <person name="McCombie W.R."/>
            <person name="Paulsen I."/>
            <person name="Potashkin J."/>
            <person name="Shpakovski G.V."/>
            <person name="Ussery D."/>
            <person name="Barrell B.G."/>
            <person name="Nurse P."/>
        </authorList>
    </citation>
    <scope>NUCLEOTIDE SEQUENCE [LARGE SCALE GENOMIC DNA]</scope>
    <source>
        <strain>972 / ATCC 24843</strain>
    </source>
</reference>
<reference key="2">
    <citation type="journal article" date="2006" name="Nat. Biotechnol.">
        <title>ORFeome cloning and global analysis of protein localization in the fission yeast Schizosaccharomyces pombe.</title>
        <authorList>
            <person name="Matsuyama A."/>
            <person name="Arai R."/>
            <person name="Yashiroda Y."/>
            <person name="Shirai A."/>
            <person name="Kamata A."/>
            <person name="Sekido S."/>
            <person name="Kobayashi Y."/>
            <person name="Hashimoto A."/>
            <person name="Hamamoto M."/>
            <person name="Hiraoka Y."/>
            <person name="Horinouchi S."/>
            <person name="Yoshida M."/>
        </authorList>
    </citation>
    <scope>SUBCELLULAR LOCATION [LARGE SCALE ANALYSIS]</scope>
</reference>
<sequence length="180" mass="21373">MSSYVPNTLSVYHNLLILEASFRKTYLQLQVRRQKYMAFYVSLLVWNFYFGYRVFYRISKYSLIDLTYKLCLLCGIVTLLLFYFSGLYRTTIVYPSRYVQQVNKAMRFFNIRLVITPVPWFQVRKPLDCGVHLILSSKRFDILVIEGWEAFRSSYFASIHRKNNSIQSNESSESPSSKQN</sequence>